<name>NADE_ORYSI</name>
<keyword id="KW-0067">ATP-binding</keyword>
<keyword id="KW-0436">Ligase</keyword>
<keyword id="KW-0520">NAD</keyword>
<keyword id="KW-0547">Nucleotide-binding</keyword>
<keyword id="KW-1185">Reference proteome</keyword>
<proteinExistence type="inferred from homology"/>
<feature type="chain" id="PRO_0000423486" description="Glutamine-dependent NAD(+) synthetase">
    <location>
        <begin position="1"/>
        <end position="735"/>
    </location>
</feature>
<feature type="domain" description="CN hydrolase" evidence="3">
    <location>
        <begin position="4"/>
        <end position="274"/>
    </location>
</feature>
<feature type="region of interest" description="Ligase" evidence="1">
    <location>
        <begin position="324"/>
        <end position="711"/>
    </location>
</feature>
<feature type="active site" description="Proton acceptor; for glutaminase activity" evidence="2">
    <location>
        <position position="44"/>
    </location>
</feature>
<feature type="active site" description="For glutaminase activity" evidence="2">
    <location>
        <position position="113"/>
    </location>
</feature>
<feature type="active site" description="Nucleophile; for glutaminase activity" evidence="2">
    <location>
        <position position="174"/>
    </location>
</feature>
<feature type="active site" evidence="1">
    <location>
        <position position="356"/>
    </location>
</feature>
<feature type="binding site" evidence="1">
    <location>
        <begin position="354"/>
        <end position="361"/>
    </location>
    <ligand>
        <name>ATP</name>
        <dbReference type="ChEBI" id="CHEBI:30616"/>
    </ligand>
</feature>
<organism>
    <name type="scientific">Oryza sativa subsp. indica</name>
    <name type="common">Rice</name>
    <dbReference type="NCBI Taxonomy" id="39946"/>
    <lineage>
        <taxon>Eukaryota</taxon>
        <taxon>Viridiplantae</taxon>
        <taxon>Streptophyta</taxon>
        <taxon>Embryophyta</taxon>
        <taxon>Tracheophyta</taxon>
        <taxon>Spermatophyta</taxon>
        <taxon>Magnoliopsida</taxon>
        <taxon>Liliopsida</taxon>
        <taxon>Poales</taxon>
        <taxon>Poaceae</taxon>
        <taxon>BOP clade</taxon>
        <taxon>Oryzoideae</taxon>
        <taxon>Oryzeae</taxon>
        <taxon>Oryzinae</taxon>
        <taxon>Oryza</taxon>
        <taxon>Oryza sativa</taxon>
    </lineage>
</organism>
<reference key="1">
    <citation type="journal article" date="2005" name="PLoS Biol.">
        <title>The genomes of Oryza sativa: a history of duplications.</title>
        <authorList>
            <person name="Yu J."/>
            <person name="Wang J."/>
            <person name="Lin W."/>
            <person name="Li S."/>
            <person name="Li H."/>
            <person name="Zhou J."/>
            <person name="Ni P."/>
            <person name="Dong W."/>
            <person name="Hu S."/>
            <person name="Zeng C."/>
            <person name="Zhang J."/>
            <person name="Zhang Y."/>
            <person name="Li R."/>
            <person name="Xu Z."/>
            <person name="Li S."/>
            <person name="Li X."/>
            <person name="Zheng H."/>
            <person name="Cong L."/>
            <person name="Lin L."/>
            <person name="Yin J."/>
            <person name="Geng J."/>
            <person name="Li G."/>
            <person name="Shi J."/>
            <person name="Liu J."/>
            <person name="Lv H."/>
            <person name="Li J."/>
            <person name="Wang J."/>
            <person name="Deng Y."/>
            <person name="Ran L."/>
            <person name="Shi X."/>
            <person name="Wang X."/>
            <person name="Wu Q."/>
            <person name="Li C."/>
            <person name="Ren X."/>
            <person name="Wang J."/>
            <person name="Wang X."/>
            <person name="Li D."/>
            <person name="Liu D."/>
            <person name="Zhang X."/>
            <person name="Ji Z."/>
            <person name="Zhao W."/>
            <person name="Sun Y."/>
            <person name="Zhang Z."/>
            <person name="Bao J."/>
            <person name="Han Y."/>
            <person name="Dong L."/>
            <person name="Ji J."/>
            <person name="Chen P."/>
            <person name="Wu S."/>
            <person name="Liu J."/>
            <person name="Xiao Y."/>
            <person name="Bu D."/>
            <person name="Tan J."/>
            <person name="Yang L."/>
            <person name="Ye C."/>
            <person name="Zhang J."/>
            <person name="Xu J."/>
            <person name="Zhou Y."/>
            <person name="Yu Y."/>
            <person name="Zhang B."/>
            <person name="Zhuang S."/>
            <person name="Wei H."/>
            <person name="Liu B."/>
            <person name="Lei M."/>
            <person name="Yu H."/>
            <person name="Li Y."/>
            <person name="Xu H."/>
            <person name="Wei S."/>
            <person name="He X."/>
            <person name="Fang L."/>
            <person name="Zhang Z."/>
            <person name="Zhang Y."/>
            <person name="Huang X."/>
            <person name="Su Z."/>
            <person name="Tong W."/>
            <person name="Li J."/>
            <person name="Tong Z."/>
            <person name="Li S."/>
            <person name="Ye J."/>
            <person name="Wang L."/>
            <person name="Fang L."/>
            <person name="Lei T."/>
            <person name="Chen C.-S."/>
            <person name="Chen H.-C."/>
            <person name="Xu Z."/>
            <person name="Li H."/>
            <person name="Huang H."/>
            <person name="Zhang F."/>
            <person name="Xu H."/>
            <person name="Li N."/>
            <person name="Zhao C."/>
            <person name="Li S."/>
            <person name="Dong L."/>
            <person name="Huang Y."/>
            <person name="Li L."/>
            <person name="Xi Y."/>
            <person name="Qi Q."/>
            <person name="Li W."/>
            <person name="Zhang B."/>
            <person name="Hu W."/>
            <person name="Zhang Y."/>
            <person name="Tian X."/>
            <person name="Jiao Y."/>
            <person name="Liang X."/>
            <person name="Jin J."/>
            <person name="Gao L."/>
            <person name="Zheng W."/>
            <person name="Hao B."/>
            <person name="Liu S.-M."/>
            <person name="Wang W."/>
            <person name="Yuan L."/>
            <person name="Cao M."/>
            <person name="McDermott J."/>
            <person name="Samudrala R."/>
            <person name="Wang J."/>
            <person name="Wong G.K.-S."/>
            <person name="Yang H."/>
        </authorList>
    </citation>
    <scope>NUCLEOTIDE SEQUENCE [LARGE SCALE GENOMIC DNA]</scope>
    <source>
        <strain>cv. 93-11</strain>
    </source>
</reference>
<gene>
    <name type="ORF">OsI_25032</name>
</gene>
<sequence>MRLLRVATCNLNQWAMDFDTNLRNVKESIARAKAAGAAVRVGPELELTGYGCEDHFLEQDTAAHAWECLKDILSGGYTDGILCSIGMPVIFKSVRYNCQVFCLNSKIVMIRPKISLANDGNYREFRWFSAWTFKDALVDFQLPLDISEVTSQDTVPFGYGFIQFLDVSLASETCEELFTANAPRIDLALNGVEVFVNASGSHHQLRKLSLRIDSMRNATLACGGVYMYANQQGCDGGRLYYDGCCCIAVNGDVVAQGSQFSLKDVEVLDALVDLDAVSSYRASVSSFREQASHRTKVPFVKVPYKLCKPFQSGMVPTGPVEVMYHRPEEEIAFGPSCWLWDYLRRSRASGFLLPLSGGADSSSVAAIVGCMCQLVVKDIENGDEQVKADAMRIGQYKDGEFPKDSRELAKRLFYTVYMGTENSSEGTRSRAKMLAEEIGSFHLDVPIDSIVSALLSLFERLTGKRPRYKVDGGSNTENLGLQNIQARIRMVLAFMMASLMPWVHNKSGFYLVLGSSNVDEGLRGYLTKYDCSSADINPIGSVSKQDLRAFLRWAAVHLHYSSLAEVEAAPPTAELEPIRADYNQLDEVDMGMTYEELSIYGRLRKIFRCGPVSMFQNLCHRWCGTLSPSEVADKVKHFFKYYAINRHKMTVLTPSYHAESYSPEDNRFDLRQFLYNARWPYQFRKIDELVQDMDKDGKWVNSTEGELRRRKGVRSAEGGGMGVVAVGSANPSAGS</sequence>
<accession>A2YII8</accession>
<comment type="catalytic activity">
    <reaction>
        <text>deamido-NAD(+) + L-glutamine + ATP + H2O = L-glutamate + AMP + diphosphate + NAD(+) + H(+)</text>
        <dbReference type="Rhea" id="RHEA:24384"/>
        <dbReference type="ChEBI" id="CHEBI:15377"/>
        <dbReference type="ChEBI" id="CHEBI:15378"/>
        <dbReference type="ChEBI" id="CHEBI:29985"/>
        <dbReference type="ChEBI" id="CHEBI:30616"/>
        <dbReference type="ChEBI" id="CHEBI:33019"/>
        <dbReference type="ChEBI" id="CHEBI:57540"/>
        <dbReference type="ChEBI" id="CHEBI:58359"/>
        <dbReference type="ChEBI" id="CHEBI:58437"/>
        <dbReference type="ChEBI" id="CHEBI:456215"/>
        <dbReference type="EC" id="6.3.5.1"/>
    </reaction>
</comment>
<comment type="pathway">
    <text>Cofactor biosynthesis; NAD(+) biosynthesis; NAD(+) from deamido-NAD(+) (L-Gln route): step 1/1.</text>
</comment>
<comment type="similarity">
    <text evidence="4">In the C-terminal section; belongs to the NAD synthetase family.</text>
</comment>
<evidence type="ECO:0000250" key="1"/>
<evidence type="ECO:0000250" key="2">
    <source>
        <dbReference type="UniProtKB" id="P9WJJ3"/>
    </source>
</evidence>
<evidence type="ECO:0000255" key="3">
    <source>
        <dbReference type="PROSITE-ProRule" id="PRU00054"/>
    </source>
</evidence>
<evidence type="ECO:0000305" key="4"/>
<protein>
    <recommendedName>
        <fullName>Glutamine-dependent NAD(+) synthetase</fullName>
        <ecNumber>6.3.5.1</ecNumber>
    </recommendedName>
    <alternativeName>
        <fullName>NAD(+) synthase [glutamine-hydrolyzing]</fullName>
    </alternativeName>
    <alternativeName>
        <fullName>NAD(+) synthetase</fullName>
    </alternativeName>
</protein>
<dbReference type="EC" id="6.3.5.1"/>
<dbReference type="EMBL" id="CM000132">
    <property type="protein sequence ID" value="EAZ02899.1"/>
    <property type="molecule type" value="Genomic_DNA"/>
</dbReference>
<dbReference type="SMR" id="A2YII8"/>
<dbReference type="STRING" id="39946.A2YII8"/>
<dbReference type="EnsemblPlants" id="BGIOSGA025213-TA">
    <property type="protein sequence ID" value="BGIOSGA025213-PA"/>
    <property type="gene ID" value="BGIOSGA025213"/>
</dbReference>
<dbReference type="EnsemblPlants" id="OsLiXu_07g0004250.02">
    <property type="protein sequence ID" value="OsLiXu_07g0004250.02"/>
    <property type="gene ID" value="OsLiXu_07g0004250"/>
</dbReference>
<dbReference type="EnsemblPlants" id="OsPr106_07g0004140.01">
    <property type="protein sequence ID" value="OsPr106_07g0004140.01"/>
    <property type="gene ID" value="OsPr106_07g0004140"/>
</dbReference>
<dbReference type="EnsemblPlants" id="OsZS97_07G004110_01">
    <property type="protein sequence ID" value="OsZS97_07G004110_01"/>
    <property type="gene ID" value="OsZS97_07G004110"/>
</dbReference>
<dbReference type="Gramene" id="BGIOSGA025213-TA">
    <property type="protein sequence ID" value="BGIOSGA025213-PA"/>
    <property type="gene ID" value="BGIOSGA025213"/>
</dbReference>
<dbReference type="Gramene" id="OsLiXu_07g0004250.02">
    <property type="protein sequence ID" value="OsLiXu_07g0004250.02"/>
    <property type="gene ID" value="OsLiXu_07g0004250"/>
</dbReference>
<dbReference type="Gramene" id="OsPr106_07g0004140.01">
    <property type="protein sequence ID" value="OsPr106_07g0004140.01"/>
    <property type="gene ID" value="OsPr106_07g0004140"/>
</dbReference>
<dbReference type="Gramene" id="OsZS97_07G004110_01">
    <property type="protein sequence ID" value="OsZS97_07G004110_01"/>
    <property type="gene ID" value="OsZS97_07G004110"/>
</dbReference>
<dbReference type="HOGENOM" id="CLU_011884_2_0_1"/>
<dbReference type="OMA" id="TSQEVCN"/>
<dbReference type="UniPathway" id="UPA00253">
    <property type="reaction ID" value="UER00334"/>
</dbReference>
<dbReference type="Proteomes" id="UP000007015">
    <property type="component" value="Chromosome 7"/>
</dbReference>
<dbReference type="GO" id="GO:0005737">
    <property type="term" value="C:cytoplasm"/>
    <property type="evidence" value="ECO:0007669"/>
    <property type="project" value="InterPro"/>
</dbReference>
<dbReference type="GO" id="GO:0005524">
    <property type="term" value="F:ATP binding"/>
    <property type="evidence" value="ECO:0007669"/>
    <property type="project" value="UniProtKB-KW"/>
</dbReference>
<dbReference type="GO" id="GO:0004359">
    <property type="term" value="F:glutaminase activity"/>
    <property type="evidence" value="ECO:0007669"/>
    <property type="project" value="InterPro"/>
</dbReference>
<dbReference type="GO" id="GO:0003952">
    <property type="term" value="F:NAD+ synthase (glutamine-hydrolyzing) activity"/>
    <property type="evidence" value="ECO:0007669"/>
    <property type="project" value="UniProtKB-EC"/>
</dbReference>
<dbReference type="GO" id="GO:0009435">
    <property type="term" value="P:NAD biosynthetic process"/>
    <property type="evidence" value="ECO:0007669"/>
    <property type="project" value="UniProtKB-UniPathway"/>
</dbReference>
<dbReference type="CDD" id="cd07570">
    <property type="entry name" value="GAT_Gln-NAD-synth"/>
    <property type="match status" value="1"/>
</dbReference>
<dbReference type="CDD" id="cd00553">
    <property type="entry name" value="NAD_synthase"/>
    <property type="match status" value="1"/>
</dbReference>
<dbReference type="FunFam" id="3.40.50.620:FF:000036">
    <property type="entry name" value="Glutamine-dependent NAD(+) synthetase"/>
    <property type="match status" value="1"/>
</dbReference>
<dbReference type="FunFam" id="3.60.110.10:FF:000003">
    <property type="entry name" value="Glutamine-dependent NAD(+) synthetase"/>
    <property type="match status" value="1"/>
</dbReference>
<dbReference type="Gene3D" id="3.60.110.10">
    <property type="entry name" value="Carbon-nitrogen hydrolase"/>
    <property type="match status" value="1"/>
</dbReference>
<dbReference type="Gene3D" id="3.40.50.620">
    <property type="entry name" value="HUPs"/>
    <property type="match status" value="1"/>
</dbReference>
<dbReference type="HAMAP" id="MF_02090">
    <property type="entry name" value="NadE_glutamine_dep"/>
    <property type="match status" value="1"/>
</dbReference>
<dbReference type="InterPro" id="IPR003010">
    <property type="entry name" value="C-N_Hydrolase"/>
</dbReference>
<dbReference type="InterPro" id="IPR036526">
    <property type="entry name" value="C-N_Hydrolase_sf"/>
</dbReference>
<dbReference type="InterPro" id="IPR014445">
    <property type="entry name" value="Gln-dep_NAD_synthase"/>
</dbReference>
<dbReference type="InterPro" id="IPR022310">
    <property type="entry name" value="NAD/GMP_synthase"/>
</dbReference>
<dbReference type="InterPro" id="IPR003694">
    <property type="entry name" value="NAD_synthase"/>
</dbReference>
<dbReference type="InterPro" id="IPR014729">
    <property type="entry name" value="Rossmann-like_a/b/a_fold"/>
</dbReference>
<dbReference type="NCBIfam" id="TIGR00552">
    <property type="entry name" value="nadE"/>
    <property type="match status" value="1"/>
</dbReference>
<dbReference type="PANTHER" id="PTHR23090:SF9">
    <property type="entry name" value="GLUTAMINE-DEPENDENT NAD(+) SYNTHETASE"/>
    <property type="match status" value="1"/>
</dbReference>
<dbReference type="PANTHER" id="PTHR23090">
    <property type="entry name" value="NH 3 /GLUTAMINE-DEPENDENT NAD + SYNTHETASE"/>
    <property type="match status" value="1"/>
</dbReference>
<dbReference type="Pfam" id="PF00795">
    <property type="entry name" value="CN_hydrolase"/>
    <property type="match status" value="1"/>
</dbReference>
<dbReference type="Pfam" id="PF02540">
    <property type="entry name" value="NAD_synthase"/>
    <property type="match status" value="1"/>
</dbReference>
<dbReference type="PIRSF" id="PIRSF006630">
    <property type="entry name" value="NADS_GAT"/>
    <property type="match status" value="1"/>
</dbReference>
<dbReference type="SUPFAM" id="SSF52402">
    <property type="entry name" value="Adenine nucleotide alpha hydrolases-like"/>
    <property type="match status" value="1"/>
</dbReference>
<dbReference type="SUPFAM" id="SSF56317">
    <property type="entry name" value="Carbon-nitrogen hydrolase"/>
    <property type="match status" value="1"/>
</dbReference>
<dbReference type="PROSITE" id="PS50263">
    <property type="entry name" value="CN_HYDROLASE"/>
    <property type="match status" value="1"/>
</dbReference>